<feature type="chain" id="PRO_0000410396" description="High osmolarity signaling protein sho1">
    <location>
        <begin position="1"/>
        <end position="309"/>
    </location>
</feature>
<feature type="topological domain" description="Cytoplasmic" evidence="2">
    <location>
        <begin position="1"/>
        <end position="36"/>
    </location>
</feature>
<feature type="transmembrane region" description="Helical" evidence="2">
    <location>
        <begin position="37"/>
        <end position="57"/>
    </location>
</feature>
<feature type="topological domain" description="Extracellular" evidence="2">
    <location>
        <begin position="58"/>
        <end position="66"/>
    </location>
</feature>
<feature type="transmembrane region" description="Helical" evidence="2">
    <location>
        <begin position="67"/>
        <end position="87"/>
    </location>
</feature>
<feature type="topological domain" description="Cytoplasmic" evidence="2">
    <location>
        <begin position="88"/>
        <end position="95"/>
    </location>
</feature>
<feature type="transmembrane region" description="Helical" evidence="2">
    <location>
        <begin position="96"/>
        <end position="116"/>
    </location>
</feature>
<feature type="topological domain" description="Extracellular" evidence="2">
    <location>
        <begin position="117"/>
        <end position="125"/>
    </location>
</feature>
<feature type="transmembrane region" description="Helical" evidence="2">
    <location>
        <begin position="126"/>
        <end position="146"/>
    </location>
</feature>
<feature type="topological domain" description="Cytoplasmic" evidence="2">
    <location>
        <begin position="147"/>
        <end position="309"/>
    </location>
</feature>
<feature type="domain" description="SH3" evidence="3">
    <location>
        <begin position="250"/>
        <end position="309"/>
    </location>
</feature>
<feature type="region of interest" description="Disordered" evidence="4">
    <location>
        <begin position="164"/>
        <end position="190"/>
    </location>
</feature>
<feature type="region of interest" description="Disordered" evidence="4">
    <location>
        <begin position="205"/>
        <end position="244"/>
    </location>
</feature>
<feature type="compositionally biased region" description="Polar residues" evidence="4">
    <location>
        <begin position="169"/>
        <end position="190"/>
    </location>
</feature>
<dbReference type="EMBL" id="GL533333">
    <property type="protein sequence ID" value="EFQ94437.1"/>
    <property type="molecule type" value="Genomic_DNA"/>
</dbReference>
<dbReference type="RefSeq" id="XP_003297495.1">
    <property type="nucleotide sequence ID" value="XM_003297447.1"/>
</dbReference>
<dbReference type="SMR" id="E3RIP0"/>
<dbReference type="STRING" id="861557.E3RIP0"/>
<dbReference type="EnsemblFungi" id="EFQ94437">
    <property type="protein sequence ID" value="EFQ94437"/>
    <property type="gene ID" value="PTT_07913"/>
</dbReference>
<dbReference type="KEGG" id="pte:PTT_07913"/>
<dbReference type="eggNOG" id="ENOG502QW7A">
    <property type="taxonomic scope" value="Eukaryota"/>
</dbReference>
<dbReference type="HOGENOM" id="CLU_043316_1_0_1"/>
<dbReference type="OrthoDB" id="5983572at2759"/>
<dbReference type="Proteomes" id="UP000001067">
    <property type="component" value="Unassembled WGS sequence"/>
</dbReference>
<dbReference type="GO" id="GO:0005886">
    <property type="term" value="C:plasma membrane"/>
    <property type="evidence" value="ECO:0007669"/>
    <property type="project" value="UniProtKB-SubCell"/>
</dbReference>
<dbReference type="CDD" id="cd11855">
    <property type="entry name" value="SH3_Sho1p"/>
    <property type="match status" value="1"/>
</dbReference>
<dbReference type="FunFam" id="2.30.30.40:FF:000213">
    <property type="entry name" value="High osmolarity signaling protein SHO1"/>
    <property type="match status" value="1"/>
</dbReference>
<dbReference type="Gene3D" id="2.30.30.40">
    <property type="entry name" value="SH3 Domains"/>
    <property type="match status" value="1"/>
</dbReference>
<dbReference type="InterPro" id="IPR036028">
    <property type="entry name" value="SH3-like_dom_sf"/>
</dbReference>
<dbReference type="InterPro" id="IPR001452">
    <property type="entry name" value="SH3_domain"/>
</dbReference>
<dbReference type="InterPro" id="IPR035522">
    <property type="entry name" value="Sho1_SH3"/>
</dbReference>
<dbReference type="Pfam" id="PF00018">
    <property type="entry name" value="SH3_1"/>
    <property type="match status" value="1"/>
</dbReference>
<dbReference type="PRINTS" id="PR00452">
    <property type="entry name" value="SH3DOMAIN"/>
</dbReference>
<dbReference type="SMART" id="SM00326">
    <property type="entry name" value="SH3"/>
    <property type="match status" value="1"/>
</dbReference>
<dbReference type="SUPFAM" id="SSF50044">
    <property type="entry name" value="SH3-domain"/>
    <property type="match status" value="1"/>
</dbReference>
<dbReference type="PROSITE" id="PS50002">
    <property type="entry name" value="SH3"/>
    <property type="match status" value="1"/>
</dbReference>
<evidence type="ECO:0000250" key="1"/>
<evidence type="ECO:0000255" key="2"/>
<evidence type="ECO:0000255" key="3">
    <source>
        <dbReference type="PROSITE-ProRule" id="PRU00192"/>
    </source>
</evidence>
<evidence type="ECO:0000256" key="4">
    <source>
        <dbReference type="SAM" id="MobiDB-lite"/>
    </source>
</evidence>
<evidence type="ECO:0000305" key="5"/>
<protein>
    <recommendedName>
        <fullName>High osmolarity signaling protein sho1</fullName>
    </recommendedName>
    <alternativeName>
        <fullName>Osmosensor sho1</fullName>
    </alternativeName>
</protein>
<name>SHO1_PYRTT</name>
<comment type="function">
    <text evidence="1">Plasma membrane osmosensor that activates the high osmolarity glycerol (HOG) MAPK signaling pathway in response to high osmolarity.</text>
</comment>
<comment type="subunit">
    <text evidence="1">Forms homooligomers.</text>
</comment>
<comment type="subcellular location">
    <subcellularLocation>
        <location evidence="1">Cell membrane</location>
        <topology evidence="1">Multi-pass membrane protein</topology>
    </subcellularLocation>
</comment>
<comment type="similarity">
    <text evidence="5">Belongs to the SHO1 family.</text>
</comment>
<sequence>MPAYGSVGSPSLRKMENGYGQRSQGFSLGRIIGDPFALATISIGILAWIIAFVSSIISAIHGGFPNFAWWTLVFMFFCIAGVTITVASDAERTYHVAIVGFLSAGLVFTTSSVNSLVYSPVAPFEAAAAGYILLSMITIVWVFYYGSQPQASHRTFVDSYALHKEGPGSRSSRPISNGYTNRPETQNASIPPQMYTSAQLNGFETSSPVSGYPGGPAGANGRNSSAPQFGGMGNSQTPTHDEQPQEISIEYPYRAKAIYSYEANPDDANEISFQKHDILEVSDVSGRWWQAKKPNGETGIAPSNYLILL</sequence>
<keyword id="KW-1003">Cell membrane</keyword>
<keyword id="KW-0472">Membrane</keyword>
<keyword id="KW-1185">Reference proteome</keyword>
<keyword id="KW-0728">SH3 domain</keyword>
<keyword id="KW-0346">Stress response</keyword>
<keyword id="KW-0812">Transmembrane</keyword>
<keyword id="KW-1133">Transmembrane helix</keyword>
<reference key="1">
    <citation type="journal article" date="2010" name="Genome Biol.">
        <title>A first genome assembly of the barley fungal pathogen Pyrenophora teres f. teres.</title>
        <authorList>
            <person name="Ellwood S.R."/>
            <person name="Liu Z."/>
            <person name="Syme R.A."/>
            <person name="Lai Z."/>
            <person name="Hane J.K."/>
            <person name="Keiper F."/>
            <person name="Moffat C.S."/>
            <person name="Oliver R.P."/>
            <person name="Friesen T.L."/>
        </authorList>
    </citation>
    <scope>NUCLEOTIDE SEQUENCE [LARGE SCALE GENOMIC DNA]</scope>
    <source>
        <strain>0-1</strain>
    </source>
</reference>
<proteinExistence type="inferred from homology"/>
<accession>E3RIP0</accession>
<gene>
    <name type="primary">sho1</name>
    <name type="ORF">PTT_07913</name>
</gene>
<organism>
    <name type="scientific">Pyrenophora teres f. teres (strain 0-1)</name>
    <name type="common">Barley net blotch fungus</name>
    <name type="synonym">Drechslera teres f. teres</name>
    <dbReference type="NCBI Taxonomy" id="861557"/>
    <lineage>
        <taxon>Eukaryota</taxon>
        <taxon>Fungi</taxon>
        <taxon>Dikarya</taxon>
        <taxon>Ascomycota</taxon>
        <taxon>Pezizomycotina</taxon>
        <taxon>Dothideomycetes</taxon>
        <taxon>Pleosporomycetidae</taxon>
        <taxon>Pleosporales</taxon>
        <taxon>Pleosporineae</taxon>
        <taxon>Pleosporaceae</taxon>
        <taxon>Pyrenophora</taxon>
    </lineage>
</organism>